<sequence>MLEQLQTLKNEAETQINEASDLKSLNDLRVKYLGKKGPMTEIMKQMGKLSAEERPKMGSLANEVRTALTEAISSKQQILETEAINEKLKSETIDVTLPGTAPSIGTKHLLTQVIEEMEDMFIGMGYEIAEGPEVELDYYNFEALNLPKDHPARDMQDSFYITENTLLRTQTSPVQARTMEKHDFSKGPIKVICPGKVYRRDNDDATHSHQFTQIEGLVVGENITFADLKGTLTVLAKTMFGEEREIRLRPSFFPFTEPSVEMDISCFKCGGKGCRVCKGTGWIEILGSGMVHPNVLEMSGIDSTRYSGFAFGLGPERVAMLKYAVDDIRHLYTNDLRFTKQFQSTETGEI</sequence>
<feature type="chain" id="PRO_1000199314" description="Phenylalanine--tRNA ligase alpha subunit">
    <location>
        <begin position="1"/>
        <end position="350"/>
    </location>
</feature>
<feature type="binding site" evidence="1">
    <location>
        <position position="257"/>
    </location>
    <ligand>
        <name>Mg(2+)</name>
        <dbReference type="ChEBI" id="CHEBI:18420"/>
        <note>shared with beta subunit</note>
    </ligand>
</feature>
<comment type="catalytic activity">
    <reaction evidence="1">
        <text>tRNA(Phe) + L-phenylalanine + ATP = L-phenylalanyl-tRNA(Phe) + AMP + diphosphate + H(+)</text>
        <dbReference type="Rhea" id="RHEA:19413"/>
        <dbReference type="Rhea" id="RHEA-COMP:9668"/>
        <dbReference type="Rhea" id="RHEA-COMP:9699"/>
        <dbReference type="ChEBI" id="CHEBI:15378"/>
        <dbReference type="ChEBI" id="CHEBI:30616"/>
        <dbReference type="ChEBI" id="CHEBI:33019"/>
        <dbReference type="ChEBI" id="CHEBI:58095"/>
        <dbReference type="ChEBI" id="CHEBI:78442"/>
        <dbReference type="ChEBI" id="CHEBI:78531"/>
        <dbReference type="ChEBI" id="CHEBI:456215"/>
        <dbReference type="EC" id="6.1.1.20"/>
    </reaction>
</comment>
<comment type="cofactor">
    <cofactor evidence="1">
        <name>Mg(2+)</name>
        <dbReference type="ChEBI" id="CHEBI:18420"/>
    </cofactor>
    <text evidence="1">Binds 2 magnesium ions per tetramer.</text>
</comment>
<comment type="subunit">
    <text evidence="1">Tetramer of two alpha and two beta subunits.</text>
</comment>
<comment type="subcellular location">
    <subcellularLocation>
        <location evidence="1">Cytoplasm</location>
    </subcellularLocation>
</comment>
<comment type="similarity">
    <text evidence="1">Belongs to the class-II aminoacyl-tRNA synthetase family. Phe-tRNA synthetase alpha subunit type 1 subfamily.</text>
</comment>
<proteinExistence type="inferred from homology"/>
<gene>
    <name evidence="1" type="primary">pheS</name>
    <name type="ordered locus">LMHCC_1432</name>
</gene>
<accession>B8DI11</accession>
<organism>
    <name type="scientific">Listeria monocytogenes serotype 4a (strain HCC23)</name>
    <dbReference type="NCBI Taxonomy" id="552536"/>
    <lineage>
        <taxon>Bacteria</taxon>
        <taxon>Bacillati</taxon>
        <taxon>Bacillota</taxon>
        <taxon>Bacilli</taxon>
        <taxon>Bacillales</taxon>
        <taxon>Listeriaceae</taxon>
        <taxon>Listeria</taxon>
    </lineage>
</organism>
<reference key="1">
    <citation type="journal article" date="2011" name="J. Bacteriol.">
        <title>Genome sequence of lineage III Listeria monocytogenes strain HCC23.</title>
        <authorList>
            <person name="Steele C.L."/>
            <person name="Donaldson J.R."/>
            <person name="Paul D."/>
            <person name="Banes M.M."/>
            <person name="Arick T."/>
            <person name="Bridges S.M."/>
            <person name="Lawrence M.L."/>
        </authorList>
    </citation>
    <scope>NUCLEOTIDE SEQUENCE [LARGE SCALE GENOMIC DNA]</scope>
    <source>
        <strain>HCC23</strain>
    </source>
</reference>
<dbReference type="EC" id="6.1.1.20" evidence="1"/>
<dbReference type="EMBL" id="CP001175">
    <property type="protein sequence ID" value="ACK39777.1"/>
    <property type="molecule type" value="Genomic_DNA"/>
</dbReference>
<dbReference type="RefSeq" id="WP_012581500.1">
    <property type="nucleotide sequence ID" value="NC_011660.1"/>
</dbReference>
<dbReference type="SMR" id="B8DI11"/>
<dbReference type="KEGG" id="lmh:LMHCC_1432"/>
<dbReference type="HOGENOM" id="CLU_025086_0_1_9"/>
<dbReference type="GO" id="GO:0005737">
    <property type="term" value="C:cytoplasm"/>
    <property type="evidence" value="ECO:0007669"/>
    <property type="project" value="UniProtKB-SubCell"/>
</dbReference>
<dbReference type="GO" id="GO:0005524">
    <property type="term" value="F:ATP binding"/>
    <property type="evidence" value="ECO:0007669"/>
    <property type="project" value="UniProtKB-UniRule"/>
</dbReference>
<dbReference type="GO" id="GO:0140096">
    <property type="term" value="F:catalytic activity, acting on a protein"/>
    <property type="evidence" value="ECO:0007669"/>
    <property type="project" value="UniProtKB-ARBA"/>
</dbReference>
<dbReference type="GO" id="GO:0000287">
    <property type="term" value="F:magnesium ion binding"/>
    <property type="evidence" value="ECO:0007669"/>
    <property type="project" value="UniProtKB-UniRule"/>
</dbReference>
<dbReference type="GO" id="GO:0004826">
    <property type="term" value="F:phenylalanine-tRNA ligase activity"/>
    <property type="evidence" value="ECO:0007669"/>
    <property type="project" value="UniProtKB-UniRule"/>
</dbReference>
<dbReference type="GO" id="GO:0016740">
    <property type="term" value="F:transferase activity"/>
    <property type="evidence" value="ECO:0007669"/>
    <property type="project" value="UniProtKB-ARBA"/>
</dbReference>
<dbReference type="GO" id="GO:0000049">
    <property type="term" value="F:tRNA binding"/>
    <property type="evidence" value="ECO:0007669"/>
    <property type="project" value="InterPro"/>
</dbReference>
<dbReference type="GO" id="GO:0006432">
    <property type="term" value="P:phenylalanyl-tRNA aminoacylation"/>
    <property type="evidence" value="ECO:0007669"/>
    <property type="project" value="UniProtKB-UniRule"/>
</dbReference>
<dbReference type="CDD" id="cd00496">
    <property type="entry name" value="PheRS_alpha_core"/>
    <property type="match status" value="1"/>
</dbReference>
<dbReference type="FunFam" id="3.30.930.10:FF:000003">
    <property type="entry name" value="Phenylalanine--tRNA ligase alpha subunit"/>
    <property type="match status" value="1"/>
</dbReference>
<dbReference type="Gene3D" id="3.30.930.10">
    <property type="entry name" value="Bira Bifunctional Protein, Domain 2"/>
    <property type="match status" value="1"/>
</dbReference>
<dbReference type="HAMAP" id="MF_00281">
    <property type="entry name" value="Phe_tRNA_synth_alpha1"/>
    <property type="match status" value="1"/>
</dbReference>
<dbReference type="InterPro" id="IPR006195">
    <property type="entry name" value="aa-tRNA-synth_II"/>
</dbReference>
<dbReference type="InterPro" id="IPR045864">
    <property type="entry name" value="aa-tRNA-synth_II/BPL/LPL"/>
</dbReference>
<dbReference type="InterPro" id="IPR004529">
    <property type="entry name" value="Phe-tRNA-synth_IIc_asu"/>
</dbReference>
<dbReference type="InterPro" id="IPR004188">
    <property type="entry name" value="Phe-tRNA_ligase_II_N"/>
</dbReference>
<dbReference type="InterPro" id="IPR022911">
    <property type="entry name" value="Phe_tRNA_ligase_alpha1_bac"/>
</dbReference>
<dbReference type="InterPro" id="IPR002319">
    <property type="entry name" value="Phenylalanyl-tRNA_Synthase"/>
</dbReference>
<dbReference type="InterPro" id="IPR010978">
    <property type="entry name" value="tRNA-bd_arm"/>
</dbReference>
<dbReference type="NCBIfam" id="TIGR00468">
    <property type="entry name" value="pheS"/>
    <property type="match status" value="1"/>
</dbReference>
<dbReference type="PANTHER" id="PTHR11538:SF41">
    <property type="entry name" value="PHENYLALANINE--TRNA LIGASE, MITOCHONDRIAL"/>
    <property type="match status" value="1"/>
</dbReference>
<dbReference type="PANTHER" id="PTHR11538">
    <property type="entry name" value="PHENYLALANYL-TRNA SYNTHETASE"/>
    <property type="match status" value="1"/>
</dbReference>
<dbReference type="Pfam" id="PF02912">
    <property type="entry name" value="Phe_tRNA-synt_N"/>
    <property type="match status" value="1"/>
</dbReference>
<dbReference type="Pfam" id="PF01409">
    <property type="entry name" value="tRNA-synt_2d"/>
    <property type="match status" value="1"/>
</dbReference>
<dbReference type="SUPFAM" id="SSF55681">
    <property type="entry name" value="Class II aaRS and biotin synthetases"/>
    <property type="match status" value="1"/>
</dbReference>
<dbReference type="SUPFAM" id="SSF46589">
    <property type="entry name" value="tRNA-binding arm"/>
    <property type="match status" value="1"/>
</dbReference>
<dbReference type="PROSITE" id="PS50862">
    <property type="entry name" value="AA_TRNA_LIGASE_II"/>
    <property type="match status" value="1"/>
</dbReference>
<evidence type="ECO:0000255" key="1">
    <source>
        <dbReference type="HAMAP-Rule" id="MF_00281"/>
    </source>
</evidence>
<protein>
    <recommendedName>
        <fullName evidence="1">Phenylalanine--tRNA ligase alpha subunit</fullName>
        <ecNumber evidence="1">6.1.1.20</ecNumber>
    </recommendedName>
    <alternativeName>
        <fullName evidence="1">Phenylalanyl-tRNA synthetase alpha subunit</fullName>
        <shortName evidence="1">PheRS</shortName>
    </alternativeName>
</protein>
<name>SYFA_LISMH</name>
<keyword id="KW-0030">Aminoacyl-tRNA synthetase</keyword>
<keyword id="KW-0067">ATP-binding</keyword>
<keyword id="KW-0963">Cytoplasm</keyword>
<keyword id="KW-0436">Ligase</keyword>
<keyword id="KW-0460">Magnesium</keyword>
<keyword id="KW-0479">Metal-binding</keyword>
<keyword id="KW-0547">Nucleotide-binding</keyword>
<keyword id="KW-0648">Protein biosynthesis</keyword>